<proteinExistence type="inferred from homology"/>
<organism>
    <name type="scientific">Klebsiella pneumoniae</name>
    <dbReference type="NCBI Taxonomy" id="573"/>
    <lineage>
        <taxon>Bacteria</taxon>
        <taxon>Pseudomonadati</taxon>
        <taxon>Pseudomonadota</taxon>
        <taxon>Gammaproteobacteria</taxon>
        <taxon>Enterobacterales</taxon>
        <taxon>Enterobacteriaceae</taxon>
        <taxon>Klebsiella/Raoultella group</taxon>
        <taxon>Klebsiella</taxon>
        <taxon>Klebsiella pneumoniae complex</taxon>
    </lineage>
</organism>
<feature type="chain" id="PRO_0000096830" description="Protein NifX">
    <location>
        <begin position="1"/>
        <end position="156"/>
    </location>
</feature>
<feature type="sequence conflict" description="In Ref. 2; CAA31116." evidence="1" ref="2">
    <original>Q</original>
    <variation>T</variation>
    <location>
        <position position="131"/>
    </location>
</feature>
<protein>
    <recommendedName>
        <fullName>Protein NifX</fullName>
    </recommendedName>
</protein>
<dbReference type="EMBL" id="X13303">
    <property type="protein sequence ID" value="CAA31673.1"/>
    <property type="molecule type" value="Genomic_DNA"/>
</dbReference>
<dbReference type="EMBL" id="X12600">
    <property type="protein sequence ID" value="CAA31116.1"/>
    <property type="molecule type" value="Genomic_DNA"/>
</dbReference>
<dbReference type="PIR" id="S01841">
    <property type="entry name" value="S01841"/>
</dbReference>
<dbReference type="SMR" id="P09136"/>
<dbReference type="GO" id="GO:0009399">
    <property type="term" value="P:nitrogen fixation"/>
    <property type="evidence" value="ECO:0007669"/>
    <property type="project" value="UniProtKB-KW"/>
</dbReference>
<dbReference type="CDD" id="cd00853">
    <property type="entry name" value="NifX"/>
    <property type="match status" value="1"/>
</dbReference>
<dbReference type="Gene3D" id="3.30.420.130">
    <property type="entry name" value="Dinitrogenase iron-molybdenum cofactor biosynthesis domain"/>
    <property type="match status" value="1"/>
</dbReference>
<dbReference type="InterPro" id="IPR003731">
    <property type="entry name" value="Di-Nase_FeMo-co_biosynth"/>
</dbReference>
<dbReference type="InterPro" id="IPR036105">
    <property type="entry name" value="DiNase_FeMo-co_biosyn_sf"/>
</dbReference>
<dbReference type="InterPro" id="IPR034169">
    <property type="entry name" value="NifX-like"/>
</dbReference>
<dbReference type="InterPro" id="IPR051840">
    <property type="entry name" value="NifX/NifY_domain"/>
</dbReference>
<dbReference type="PANTHER" id="PTHR33937:SF1">
    <property type="entry name" value="IRON-MOLIBDENUM COFACTOR PROCESSING PROTEIN"/>
    <property type="match status" value="1"/>
</dbReference>
<dbReference type="PANTHER" id="PTHR33937">
    <property type="entry name" value="IRON-MOLYBDENUM PROTEIN-RELATED-RELATED"/>
    <property type="match status" value="1"/>
</dbReference>
<dbReference type="Pfam" id="PF02579">
    <property type="entry name" value="Nitro_FeMo-Co"/>
    <property type="match status" value="1"/>
</dbReference>
<dbReference type="SUPFAM" id="SSF53146">
    <property type="entry name" value="Nitrogenase accessory factor-like"/>
    <property type="match status" value="1"/>
</dbReference>
<sequence>MPPINRQFDMVHSDEWSMKVAFASSDYRHVDQHFGATPRLVVYGVKADRVTLIRVVDFSVENGHQTEKIARRIHALEDCVTLFCVAIGDAVFRQLLQVGVRAERVPADTTIVGLLQEIQLYWYDKGQRKNQRQRDPERFTRLLQEQEWHGDPDPRR</sequence>
<gene>
    <name type="primary">nifX</name>
</gene>
<comment type="similarity">
    <text evidence="1">Belongs to the NifX/NifY family.</text>
</comment>
<reference key="1">
    <citation type="journal article" date="1988" name="J. Mol. Biol.">
        <title>Nucleotide sequence of a 24,206-base-pair DNA fragment carrying the entire nitrogen fixation gene cluster of Klebsiella pneumoniae.</title>
        <authorList>
            <person name="Arnold W."/>
            <person name="Rump A."/>
            <person name="Klipp W."/>
            <person name="Priefer U.B."/>
            <person name="Puehler A."/>
        </authorList>
    </citation>
    <scope>NUCLEOTIDE SEQUENCE [GENOMIC DNA]</scope>
</reference>
<reference key="2">
    <citation type="journal article" date="1988" name="Nucleic Acids Res.">
        <title>The nucleotide sequence of the nifT, nifY, nifX and nifW genes of K. pneumoniae.</title>
        <authorList>
            <person name="Beynon J."/>
            <person name="Cannon M."/>
            <person name="Banan-Wollaston V."/>
            <person name="Ally A."/>
            <person name="Sutterquist R."/>
            <person name="Cannon F."/>
        </authorList>
    </citation>
    <scope>NUCLEOTIDE SEQUENCE [GENOMIC DNA]</scope>
</reference>
<name>NIFX_KLEPN</name>
<evidence type="ECO:0000305" key="1"/>
<accession>P09136</accession>
<keyword id="KW-0535">Nitrogen fixation</keyword>